<keyword id="KW-1185">Reference proteome</keyword>
<proteinExistence type="inferred from homology"/>
<feature type="chain" id="PRO_0000336120" description="UPF0102 protein Adeh_1910">
    <location>
        <begin position="1"/>
        <end position="134"/>
    </location>
</feature>
<protein>
    <recommendedName>
        <fullName evidence="1">UPF0102 protein Adeh_1910</fullName>
    </recommendedName>
</protein>
<organism>
    <name type="scientific">Anaeromyxobacter dehalogenans (strain 2CP-C)</name>
    <dbReference type="NCBI Taxonomy" id="290397"/>
    <lineage>
        <taxon>Bacteria</taxon>
        <taxon>Pseudomonadati</taxon>
        <taxon>Myxococcota</taxon>
        <taxon>Myxococcia</taxon>
        <taxon>Myxococcales</taxon>
        <taxon>Cystobacterineae</taxon>
        <taxon>Anaeromyxobacteraceae</taxon>
        <taxon>Anaeromyxobacter</taxon>
    </lineage>
</organism>
<name>Y1910_ANADE</name>
<sequence length="134" mass="14216">MAGGAGGDGDGRQALGREGEALAAAWLAERGFRILDRNHRTRRGEVDLVCRDGEVLVFVEVRSRTSGAQGGPEETVGPLKGRRVVAAATDWALGHGGLEQAIRFDVVAVTFGDGEPRVEHFPAAFDGDGRPGHW</sequence>
<gene>
    <name type="ordered locus">Adeh_1910</name>
</gene>
<accession>Q2IJ48</accession>
<evidence type="ECO:0000255" key="1">
    <source>
        <dbReference type="HAMAP-Rule" id="MF_00048"/>
    </source>
</evidence>
<dbReference type="EMBL" id="CP000251">
    <property type="protein sequence ID" value="ABC81681.1"/>
    <property type="molecule type" value="Genomic_DNA"/>
</dbReference>
<dbReference type="RefSeq" id="WP_011420964.1">
    <property type="nucleotide sequence ID" value="NC_007760.1"/>
</dbReference>
<dbReference type="SMR" id="Q2IJ48"/>
<dbReference type="STRING" id="290397.Adeh_1910"/>
<dbReference type="KEGG" id="ade:Adeh_1910"/>
<dbReference type="eggNOG" id="COG0792">
    <property type="taxonomic scope" value="Bacteria"/>
</dbReference>
<dbReference type="HOGENOM" id="CLU_115353_2_3_7"/>
<dbReference type="OrthoDB" id="9794876at2"/>
<dbReference type="Proteomes" id="UP000001935">
    <property type="component" value="Chromosome"/>
</dbReference>
<dbReference type="GO" id="GO:0003676">
    <property type="term" value="F:nucleic acid binding"/>
    <property type="evidence" value="ECO:0007669"/>
    <property type="project" value="InterPro"/>
</dbReference>
<dbReference type="Gene3D" id="3.40.1350.10">
    <property type="match status" value="1"/>
</dbReference>
<dbReference type="HAMAP" id="MF_00048">
    <property type="entry name" value="UPF0102"/>
    <property type="match status" value="1"/>
</dbReference>
<dbReference type="InterPro" id="IPR011335">
    <property type="entry name" value="Restrct_endonuc-II-like"/>
</dbReference>
<dbReference type="InterPro" id="IPR011856">
    <property type="entry name" value="tRNA_endonuc-like_dom_sf"/>
</dbReference>
<dbReference type="InterPro" id="IPR003509">
    <property type="entry name" value="UPF0102_YraN-like"/>
</dbReference>
<dbReference type="NCBIfam" id="NF009150">
    <property type="entry name" value="PRK12497.1-3"/>
    <property type="match status" value="1"/>
</dbReference>
<dbReference type="NCBIfam" id="NF009154">
    <property type="entry name" value="PRK12497.3-3"/>
    <property type="match status" value="1"/>
</dbReference>
<dbReference type="NCBIfam" id="TIGR00252">
    <property type="entry name" value="YraN family protein"/>
    <property type="match status" value="1"/>
</dbReference>
<dbReference type="PANTHER" id="PTHR34039">
    <property type="entry name" value="UPF0102 PROTEIN YRAN"/>
    <property type="match status" value="1"/>
</dbReference>
<dbReference type="PANTHER" id="PTHR34039:SF1">
    <property type="entry name" value="UPF0102 PROTEIN YRAN"/>
    <property type="match status" value="1"/>
</dbReference>
<dbReference type="Pfam" id="PF02021">
    <property type="entry name" value="UPF0102"/>
    <property type="match status" value="1"/>
</dbReference>
<dbReference type="SUPFAM" id="SSF52980">
    <property type="entry name" value="Restriction endonuclease-like"/>
    <property type="match status" value="1"/>
</dbReference>
<reference key="1">
    <citation type="submission" date="2006-01" db="EMBL/GenBank/DDBJ databases">
        <title>Complete sequence of Anaeromyxobacter dehalogenans 2CP-C.</title>
        <authorList>
            <person name="Copeland A."/>
            <person name="Lucas S."/>
            <person name="Lapidus A."/>
            <person name="Barry K."/>
            <person name="Detter J.C."/>
            <person name="Glavina T."/>
            <person name="Hammon N."/>
            <person name="Israni S."/>
            <person name="Pitluck S."/>
            <person name="Brettin T."/>
            <person name="Bruce D."/>
            <person name="Han C."/>
            <person name="Tapia R."/>
            <person name="Gilna P."/>
            <person name="Kiss H."/>
            <person name="Schmutz J."/>
            <person name="Larimer F."/>
            <person name="Land M."/>
            <person name="Kyrpides N."/>
            <person name="Anderson I."/>
            <person name="Sanford R.A."/>
            <person name="Ritalahti K.M."/>
            <person name="Thomas H.S."/>
            <person name="Kirby J.R."/>
            <person name="Zhulin I.B."/>
            <person name="Loeffler F.E."/>
            <person name="Richardson P."/>
        </authorList>
    </citation>
    <scope>NUCLEOTIDE SEQUENCE [LARGE SCALE GENOMIC DNA]</scope>
    <source>
        <strain>2CP-C</strain>
    </source>
</reference>
<comment type="similarity">
    <text evidence="1">Belongs to the UPF0102 family.</text>
</comment>